<sequence length="234" mass="26640">MTIASSHSINNGMNTGKLVNQLSSLPDRNTHNGQEVKYHPENVELNKEKMMDAVRVMLESVGEDPEREGLLKTPKRVAEAMQFLTQGYDQSLEKLVNGAIFDEGHNEMVLVRDIDFFSLCEHHMLPFMGKAHLAYIPNQKVVGLSKLARIVEMFSRRLQVQERLTRQIAEAVQEILDPQGVAVVMEATHMCMVMRGVQKPGSWTVTSAMIGSFQNEQKTREEFLNLIRHQPNFY</sequence>
<gene>
    <name type="primary">folE</name>
    <name type="ordered locus">slr0426</name>
</gene>
<name>GCH1_SYNY3</name>
<keyword id="KW-0342">GTP-binding</keyword>
<keyword id="KW-0378">Hydrolase</keyword>
<keyword id="KW-0479">Metal-binding</keyword>
<keyword id="KW-0547">Nucleotide-binding</keyword>
<keyword id="KW-0554">One-carbon metabolism</keyword>
<keyword id="KW-1185">Reference proteome</keyword>
<keyword id="KW-0862">Zinc</keyword>
<protein>
    <recommendedName>
        <fullName>GTP cyclohydrolase 1</fullName>
        <ecNumber>3.5.4.16</ecNumber>
    </recommendedName>
    <alternativeName>
        <fullName>GTP cyclohydrolase I</fullName>
        <shortName>GTP-CH-I</shortName>
    </alternativeName>
</protein>
<proteinExistence type="inferred from homology"/>
<feature type="chain" id="PRO_0000119458" description="GTP cyclohydrolase 1">
    <location>
        <begin position="1"/>
        <end position="234"/>
    </location>
</feature>
<feature type="binding site" evidence="1">
    <location>
        <position position="120"/>
    </location>
    <ligand>
        <name>Zn(2+)</name>
        <dbReference type="ChEBI" id="CHEBI:29105"/>
    </ligand>
</feature>
<feature type="binding site" evidence="1">
    <location>
        <position position="123"/>
    </location>
    <ligand>
        <name>Zn(2+)</name>
        <dbReference type="ChEBI" id="CHEBI:29105"/>
    </ligand>
</feature>
<feature type="binding site" evidence="1">
    <location>
        <position position="191"/>
    </location>
    <ligand>
        <name>Zn(2+)</name>
        <dbReference type="ChEBI" id="CHEBI:29105"/>
    </ligand>
</feature>
<reference key="1">
    <citation type="journal article" date="1995" name="DNA Res.">
        <title>Sequence analysis of the genome of the unicellular cyanobacterium Synechocystis sp. strain PCC6803. I. Sequence features in the 1 Mb region from map positions 64% to 92% of the genome.</title>
        <authorList>
            <person name="Kaneko T."/>
            <person name="Tanaka A."/>
            <person name="Sato S."/>
            <person name="Kotani H."/>
            <person name="Sazuka T."/>
            <person name="Miyajima N."/>
            <person name="Sugiura M."/>
            <person name="Tabata S."/>
        </authorList>
    </citation>
    <scope>NUCLEOTIDE SEQUENCE [LARGE SCALE GENOMIC DNA]</scope>
    <source>
        <strain>ATCC 27184 / PCC 6803 / N-1</strain>
    </source>
</reference>
<reference key="2">
    <citation type="journal article" date="1996" name="DNA Res.">
        <title>Sequence analysis of the genome of the unicellular cyanobacterium Synechocystis sp. strain PCC6803. II. Sequence determination of the entire genome and assignment of potential protein-coding regions.</title>
        <authorList>
            <person name="Kaneko T."/>
            <person name="Sato S."/>
            <person name="Kotani H."/>
            <person name="Tanaka A."/>
            <person name="Asamizu E."/>
            <person name="Nakamura Y."/>
            <person name="Miyajima N."/>
            <person name="Hirosawa M."/>
            <person name="Sugiura M."/>
            <person name="Sasamoto S."/>
            <person name="Kimura T."/>
            <person name="Hosouchi T."/>
            <person name="Matsuno A."/>
            <person name="Muraki A."/>
            <person name="Nakazaki N."/>
            <person name="Naruo K."/>
            <person name="Okumura S."/>
            <person name="Shimpo S."/>
            <person name="Takeuchi C."/>
            <person name="Wada T."/>
            <person name="Watanabe A."/>
            <person name="Yamada M."/>
            <person name="Yasuda M."/>
            <person name="Tabata S."/>
        </authorList>
    </citation>
    <scope>NUCLEOTIDE SEQUENCE [LARGE SCALE GENOMIC DNA]</scope>
    <source>
        <strain>ATCC 27184 / PCC 6803 / Kazusa</strain>
    </source>
</reference>
<comment type="catalytic activity">
    <reaction>
        <text>GTP + H2O = 7,8-dihydroneopterin 3'-triphosphate + formate + H(+)</text>
        <dbReference type="Rhea" id="RHEA:17473"/>
        <dbReference type="ChEBI" id="CHEBI:15377"/>
        <dbReference type="ChEBI" id="CHEBI:15378"/>
        <dbReference type="ChEBI" id="CHEBI:15740"/>
        <dbReference type="ChEBI" id="CHEBI:37565"/>
        <dbReference type="ChEBI" id="CHEBI:58462"/>
        <dbReference type="EC" id="3.5.4.16"/>
    </reaction>
</comment>
<comment type="pathway">
    <text>Cofactor biosynthesis; 7,8-dihydroneopterin triphosphate biosynthesis; 7,8-dihydroneopterin triphosphate from GTP: step 1/1.</text>
</comment>
<comment type="subunit">
    <text evidence="1">Toroid-shaped homodecamer, composed of two pentamers of five dimers.</text>
</comment>
<comment type="similarity">
    <text evidence="2">Belongs to the GTP cyclohydrolase I family.</text>
</comment>
<dbReference type="EC" id="3.5.4.16"/>
<dbReference type="EMBL" id="BA000022">
    <property type="protein sequence ID" value="BAA10406.1"/>
    <property type="molecule type" value="Genomic_DNA"/>
</dbReference>
<dbReference type="PIR" id="S76560">
    <property type="entry name" value="S76560"/>
</dbReference>
<dbReference type="SMR" id="Q55759"/>
<dbReference type="FunCoup" id="Q55759">
    <property type="interactions" value="272"/>
</dbReference>
<dbReference type="IntAct" id="Q55759">
    <property type="interactions" value="1"/>
</dbReference>
<dbReference type="STRING" id="1148.gene:10499907"/>
<dbReference type="PaxDb" id="1148-1001671"/>
<dbReference type="EnsemblBacteria" id="BAA10406">
    <property type="protein sequence ID" value="BAA10406"/>
    <property type="gene ID" value="BAA10406"/>
</dbReference>
<dbReference type="KEGG" id="syn:slr0426"/>
<dbReference type="eggNOG" id="COG0302">
    <property type="taxonomic scope" value="Bacteria"/>
</dbReference>
<dbReference type="InParanoid" id="Q55759"/>
<dbReference type="PhylomeDB" id="Q55759"/>
<dbReference type="UniPathway" id="UPA00848">
    <property type="reaction ID" value="UER00151"/>
</dbReference>
<dbReference type="Proteomes" id="UP000001425">
    <property type="component" value="Chromosome"/>
</dbReference>
<dbReference type="GO" id="GO:0005737">
    <property type="term" value="C:cytoplasm"/>
    <property type="evidence" value="ECO:0000318"/>
    <property type="project" value="GO_Central"/>
</dbReference>
<dbReference type="GO" id="GO:0005525">
    <property type="term" value="F:GTP binding"/>
    <property type="evidence" value="ECO:0000318"/>
    <property type="project" value="GO_Central"/>
</dbReference>
<dbReference type="GO" id="GO:0003934">
    <property type="term" value="F:GTP cyclohydrolase I activity"/>
    <property type="evidence" value="ECO:0000318"/>
    <property type="project" value="GO_Central"/>
</dbReference>
<dbReference type="GO" id="GO:0008270">
    <property type="term" value="F:zinc ion binding"/>
    <property type="evidence" value="ECO:0000318"/>
    <property type="project" value="GO_Central"/>
</dbReference>
<dbReference type="GO" id="GO:0006730">
    <property type="term" value="P:one-carbon metabolic process"/>
    <property type="evidence" value="ECO:0007669"/>
    <property type="project" value="UniProtKB-UniRule"/>
</dbReference>
<dbReference type="GO" id="GO:0006729">
    <property type="term" value="P:tetrahydrobiopterin biosynthetic process"/>
    <property type="evidence" value="ECO:0000318"/>
    <property type="project" value="GO_Central"/>
</dbReference>
<dbReference type="GO" id="GO:0046654">
    <property type="term" value="P:tetrahydrofolate biosynthetic process"/>
    <property type="evidence" value="ECO:0007669"/>
    <property type="project" value="UniProtKB-UniRule"/>
</dbReference>
<dbReference type="CDD" id="cd00642">
    <property type="entry name" value="GTP_cyclohydro1"/>
    <property type="match status" value="1"/>
</dbReference>
<dbReference type="FunFam" id="1.10.286.10:FF:000003">
    <property type="entry name" value="GTP cyclohydrolase 1"/>
    <property type="match status" value="1"/>
</dbReference>
<dbReference type="FunFam" id="3.30.1130.10:FF:000012">
    <property type="entry name" value="GTP cyclohydrolase 1"/>
    <property type="match status" value="1"/>
</dbReference>
<dbReference type="Gene3D" id="1.10.286.10">
    <property type="match status" value="1"/>
</dbReference>
<dbReference type="Gene3D" id="3.30.1130.10">
    <property type="match status" value="1"/>
</dbReference>
<dbReference type="HAMAP" id="MF_00223">
    <property type="entry name" value="FolE"/>
    <property type="match status" value="1"/>
</dbReference>
<dbReference type="InterPro" id="IPR043133">
    <property type="entry name" value="GTP-CH-I_C/QueF"/>
</dbReference>
<dbReference type="InterPro" id="IPR043134">
    <property type="entry name" value="GTP-CH-I_N"/>
</dbReference>
<dbReference type="InterPro" id="IPR001474">
    <property type="entry name" value="GTP_CycHdrlase_I"/>
</dbReference>
<dbReference type="InterPro" id="IPR018234">
    <property type="entry name" value="GTP_CycHdrlase_I_CS"/>
</dbReference>
<dbReference type="InterPro" id="IPR020602">
    <property type="entry name" value="GTP_CycHdrlase_I_dom"/>
</dbReference>
<dbReference type="NCBIfam" id="TIGR00063">
    <property type="entry name" value="folE"/>
    <property type="match status" value="1"/>
</dbReference>
<dbReference type="NCBIfam" id="NF006825">
    <property type="entry name" value="PRK09347.1-2"/>
    <property type="match status" value="1"/>
</dbReference>
<dbReference type="NCBIfam" id="NF006826">
    <property type="entry name" value="PRK09347.1-3"/>
    <property type="match status" value="1"/>
</dbReference>
<dbReference type="PANTHER" id="PTHR11109:SF7">
    <property type="entry name" value="GTP CYCLOHYDROLASE 1"/>
    <property type="match status" value="1"/>
</dbReference>
<dbReference type="PANTHER" id="PTHR11109">
    <property type="entry name" value="GTP CYCLOHYDROLASE I"/>
    <property type="match status" value="1"/>
</dbReference>
<dbReference type="Pfam" id="PF01227">
    <property type="entry name" value="GTP_cyclohydroI"/>
    <property type="match status" value="1"/>
</dbReference>
<dbReference type="SUPFAM" id="SSF55620">
    <property type="entry name" value="Tetrahydrobiopterin biosynthesis enzymes-like"/>
    <property type="match status" value="1"/>
</dbReference>
<dbReference type="PROSITE" id="PS00859">
    <property type="entry name" value="GTP_CYCLOHYDROL_1_1"/>
    <property type="match status" value="1"/>
</dbReference>
<dbReference type="PROSITE" id="PS00860">
    <property type="entry name" value="GTP_CYCLOHYDROL_1_2"/>
    <property type="match status" value="1"/>
</dbReference>
<organism>
    <name type="scientific">Synechocystis sp. (strain ATCC 27184 / PCC 6803 / Kazusa)</name>
    <dbReference type="NCBI Taxonomy" id="1111708"/>
    <lineage>
        <taxon>Bacteria</taxon>
        <taxon>Bacillati</taxon>
        <taxon>Cyanobacteriota</taxon>
        <taxon>Cyanophyceae</taxon>
        <taxon>Synechococcales</taxon>
        <taxon>Merismopediaceae</taxon>
        <taxon>Synechocystis</taxon>
    </lineage>
</organism>
<evidence type="ECO:0000250" key="1"/>
<evidence type="ECO:0000305" key="2"/>
<accession>Q55759</accession>